<comment type="similarity">
    <text evidence="2">Belongs to the eukaryotic ribosomal protein eL36 family.</text>
</comment>
<dbReference type="EMBL" id="AB045113">
    <property type="protein sequence ID" value="BAA96853.1"/>
    <property type="molecule type" value="mRNA"/>
</dbReference>
<dbReference type="SMR" id="Q9LRB8"/>
<dbReference type="GO" id="GO:1990904">
    <property type="term" value="C:ribonucleoprotein complex"/>
    <property type="evidence" value="ECO:0007669"/>
    <property type="project" value="UniProtKB-KW"/>
</dbReference>
<dbReference type="GO" id="GO:0005840">
    <property type="term" value="C:ribosome"/>
    <property type="evidence" value="ECO:0007669"/>
    <property type="project" value="UniProtKB-KW"/>
</dbReference>
<dbReference type="GO" id="GO:0003735">
    <property type="term" value="F:structural constituent of ribosome"/>
    <property type="evidence" value="ECO:0007669"/>
    <property type="project" value="InterPro"/>
</dbReference>
<dbReference type="GO" id="GO:0006412">
    <property type="term" value="P:translation"/>
    <property type="evidence" value="ECO:0007669"/>
    <property type="project" value="InterPro"/>
</dbReference>
<dbReference type="FunFam" id="1.10.10.1760:FF:000001">
    <property type="entry name" value="60S ribosomal protein L36"/>
    <property type="match status" value="1"/>
</dbReference>
<dbReference type="Gene3D" id="1.10.10.1760">
    <property type="entry name" value="60S ribosomal protein L36"/>
    <property type="match status" value="1"/>
</dbReference>
<dbReference type="InterPro" id="IPR000509">
    <property type="entry name" value="Ribosomal_eL36"/>
</dbReference>
<dbReference type="InterPro" id="IPR038097">
    <property type="entry name" value="Ribosomal_eL36_sf"/>
</dbReference>
<dbReference type="PANTHER" id="PTHR10114">
    <property type="entry name" value="60S RIBOSOMAL PROTEIN L36"/>
    <property type="match status" value="1"/>
</dbReference>
<dbReference type="Pfam" id="PF01158">
    <property type="entry name" value="Ribosomal_L36e"/>
    <property type="match status" value="1"/>
</dbReference>
<dbReference type="PROSITE" id="PS01190">
    <property type="entry name" value="RIBOSOMAL_L36E"/>
    <property type="match status" value="1"/>
</dbReference>
<reference key="1">
    <citation type="journal article" date="2000" name="DNA Res.">
        <title>Isolation of a cDNA encoding a homologue of ribosomal protein L36 in a marine green alga, Enteromorpha compressa.</title>
        <authorList>
            <person name="Abe J."/>
            <person name="Kitade Y."/>
            <person name="Kuwano K."/>
            <person name="Watanabe T."/>
            <person name="Saga N."/>
        </authorList>
    </citation>
    <scope>NUCLEOTIDE SEQUENCE [MRNA]</scope>
    <source>
        <strain>MGEC1</strain>
    </source>
</reference>
<proteinExistence type="inferred from homology"/>
<protein>
    <recommendedName>
        <fullName evidence="2">Large ribosomal subunit protein eL36</fullName>
    </recommendedName>
    <alternativeName>
        <fullName>60S ribosomal protein L36</fullName>
    </alternativeName>
</protein>
<gene>
    <name type="primary">RL36</name>
</gene>
<keyword id="KW-0687">Ribonucleoprotein</keyword>
<keyword id="KW-0689">Ribosomal protein</keyword>
<accession>Q9LRB8</accession>
<evidence type="ECO:0000256" key="1">
    <source>
        <dbReference type="SAM" id="MobiDB-lite"/>
    </source>
</evidence>
<evidence type="ECO:0000305" key="2"/>
<feature type="chain" id="PRO_0000195016" description="Large ribosomal subunit protein eL36">
    <location>
        <begin position="1"/>
        <end position="101"/>
    </location>
</feature>
<feature type="region of interest" description="Disordered" evidence="1">
    <location>
        <begin position="1"/>
        <end position="31"/>
    </location>
</feature>
<feature type="region of interest" description="Disordered" evidence="1">
    <location>
        <begin position="75"/>
        <end position="101"/>
    </location>
</feature>
<organism>
    <name type="scientific">Ulva compressa</name>
    <name type="common">Green alga</name>
    <name type="synonym">Enteromorpha compressa</name>
    <dbReference type="NCBI Taxonomy" id="63659"/>
    <lineage>
        <taxon>Eukaryota</taxon>
        <taxon>Viridiplantae</taxon>
        <taxon>Chlorophyta</taxon>
        <taxon>Ulvophyceae</taxon>
        <taxon>OUU clade</taxon>
        <taxon>Ulvales</taxon>
        <taxon>Ulvaceae</taxon>
        <taxon>Ulva</taxon>
    </lineage>
</organism>
<name>RL36_ULVCO</name>
<sequence length="101" mass="11426">MGEIAVGLNKGHQVTKKAGTPRPSRRKGFLSQRVKKVRAVVREVAGWAPYERRVMELLKVGKDKRALKMCKRKLGTHMRGKKKREEMAGVLRKMQAASKGE</sequence>